<evidence type="ECO:0000255" key="1">
    <source>
        <dbReference type="HAMAP-Rule" id="MF_01323"/>
    </source>
</evidence>
<comment type="function">
    <text evidence="1">DNA-dependent RNA polymerase catalyzes the transcription of DNA into RNA using the four ribonucleoside triphosphates as substrates.</text>
</comment>
<comment type="catalytic activity">
    <reaction evidence="1">
        <text>RNA(n) + a ribonucleoside 5'-triphosphate = RNA(n+1) + diphosphate</text>
        <dbReference type="Rhea" id="RHEA:21248"/>
        <dbReference type="Rhea" id="RHEA-COMP:14527"/>
        <dbReference type="Rhea" id="RHEA-COMP:17342"/>
        <dbReference type="ChEBI" id="CHEBI:33019"/>
        <dbReference type="ChEBI" id="CHEBI:61557"/>
        <dbReference type="ChEBI" id="CHEBI:140395"/>
        <dbReference type="EC" id="2.7.7.6"/>
    </reaction>
</comment>
<comment type="cofactor">
    <cofactor evidence="1">
        <name>Mg(2+)</name>
        <dbReference type="ChEBI" id="CHEBI:18420"/>
    </cofactor>
    <text evidence="1">Binds 1 Mg(2+) ion per subunit.</text>
</comment>
<comment type="cofactor">
    <cofactor evidence="1">
        <name>Zn(2+)</name>
        <dbReference type="ChEBI" id="CHEBI:29105"/>
    </cofactor>
    <text evidence="1">Binds 1 Zn(2+) ion per subunit.</text>
</comment>
<comment type="subunit">
    <text evidence="1">In plastids the minimal PEP RNA polymerase catalytic core is composed of four subunits: alpha, beta, beta', and beta''. When a (nuclear-encoded) sigma factor is associated with the core the holoenzyme is formed, which can initiate transcription.</text>
</comment>
<comment type="subcellular location">
    <subcellularLocation>
        <location evidence="1">Plastid</location>
        <location evidence="1">Chloroplast</location>
    </subcellularLocation>
</comment>
<comment type="similarity">
    <text evidence="1">Belongs to the RNA polymerase beta' chain family. RpoC1 subfamily.</text>
</comment>
<gene>
    <name evidence="1" type="primary">rpoC1</name>
</gene>
<name>RPOC1_MANES</name>
<organism>
    <name type="scientific">Manihot esculenta</name>
    <name type="common">Cassava</name>
    <name type="synonym">Jatropha manihot</name>
    <dbReference type="NCBI Taxonomy" id="3983"/>
    <lineage>
        <taxon>Eukaryota</taxon>
        <taxon>Viridiplantae</taxon>
        <taxon>Streptophyta</taxon>
        <taxon>Embryophyta</taxon>
        <taxon>Tracheophyta</taxon>
        <taxon>Spermatophyta</taxon>
        <taxon>Magnoliopsida</taxon>
        <taxon>eudicotyledons</taxon>
        <taxon>Gunneridae</taxon>
        <taxon>Pentapetalae</taxon>
        <taxon>rosids</taxon>
        <taxon>fabids</taxon>
        <taxon>Malpighiales</taxon>
        <taxon>Euphorbiaceae</taxon>
        <taxon>Crotonoideae</taxon>
        <taxon>Manihoteae</taxon>
        <taxon>Manihot</taxon>
    </lineage>
</organism>
<reference key="1">
    <citation type="journal article" date="2008" name="Theor. Appl. Genet.">
        <title>The complete nucleotide sequence of the cassava (Manihot esculenta) chloroplast genome and the evolution of atpF in Malpighiales: RNA editing and multiple losses of a group II intron.</title>
        <authorList>
            <person name="Daniell H."/>
            <person name="Wurdack K.J."/>
            <person name="Kanagaraj A."/>
            <person name="Lee S.-B."/>
            <person name="Saski C."/>
            <person name="Jansen R.K."/>
        </authorList>
    </citation>
    <scope>NUCLEOTIDE SEQUENCE [LARGE SCALE GENOMIC DNA]</scope>
    <source>
        <strain>cv. TME3</strain>
    </source>
</reference>
<keyword id="KW-0150">Chloroplast</keyword>
<keyword id="KW-0240">DNA-directed RNA polymerase</keyword>
<keyword id="KW-0460">Magnesium</keyword>
<keyword id="KW-0479">Metal-binding</keyword>
<keyword id="KW-0548">Nucleotidyltransferase</keyword>
<keyword id="KW-0934">Plastid</keyword>
<keyword id="KW-0804">Transcription</keyword>
<keyword id="KW-0808">Transferase</keyword>
<keyword id="KW-0862">Zinc</keyword>
<sequence length="680" mass="78352">MIDRYKHQQLRIGSVSPQQISAWANKILPNGEIVGEVTKPYTFHYKTNKPEKDGLFCERIFGPIKSGICACGNYRVIRNEKEDQKFCEQCGVEFVDSRIRRYQMGYIKLACPVTHVWYLKRLPSYIANLLDKPLKELEGLVYCDFSFARPIAKKPTFLRLRGSFEYEIQSWKYSIPLFFTTQCFDTFRNREISTGAGAIREQLADLDLRIIIDYSSVEWKELGEEGPTGNEWEDRKVGRRKDFLVRRVELAKHFIRTNIEPEWMVLCLLPVLPPELRPIIQIDGGKLMSSDINELYRRVIYRNNTLIDLLTTSRSTPGELVMCQEKLVQEAVDTLLDNGIRGQPMRDGHNKVYKSFSDVIEGKEGRFRETMLGKRVDYSGRSVIVVGPSLSLHRCGLPREIAIELFQIFVIRGLIRQHLASNIGVAKSKIREKEPIVWEILHEVMQGHPVLLNRAPTLHRLGIQAFQPILVEGRAICLHPLVCKGFNADFDGDQMAVHVPLSLEAQAEARLLMFSHMNLLSPAIGDPISVPTQDMLIGLYVLTSGNRRGICANRYNPCNRRNYQNKRIDGNNDKYTKEPLFSNSYDALGAYRQKRIHLDSPLWLRWQLDQRAITSREAPIEVHYESLGTYHEIYEHYLIVRNIKKEILCIYIRTTVGHISLYREIEEAIQGFCQACSDGI</sequence>
<accession>B1NWE1</accession>
<proteinExistence type="inferred from homology"/>
<dbReference type="EC" id="2.7.7.6" evidence="1"/>
<dbReference type="EMBL" id="EU117376">
    <property type="protein sequence ID" value="ABV66145.1"/>
    <property type="molecule type" value="Genomic_DNA"/>
</dbReference>
<dbReference type="RefSeq" id="YP_001718428.1">
    <property type="nucleotide sequence ID" value="NC_010433.1"/>
</dbReference>
<dbReference type="SMR" id="B1NWE1"/>
<dbReference type="GeneID" id="6000060"/>
<dbReference type="KEGG" id="mesc:6000060"/>
<dbReference type="OrthoDB" id="810980at2759"/>
<dbReference type="GO" id="GO:0009507">
    <property type="term" value="C:chloroplast"/>
    <property type="evidence" value="ECO:0007669"/>
    <property type="project" value="UniProtKB-SubCell"/>
</dbReference>
<dbReference type="GO" id="GO:0000428">
    <property type="term" value="C:DNA-directed RNA polymerase complex"/>
    <property type="evidence" value="ECO:0007669"/>
    <property type="project" value="UniProtKB-KW"/>
</dbReference>
<dbReference type="GO" id="GO:0005739">
    <property type="term" value="C:mitochondrion"/>
    <property type="evidence" value="ECO:0007669"/>
    <property type="project" value="GOC"/>
</dbReference>
<dbReference type="GO" id="GO:0003677">
    <property type="term" value="F:DNA binding"/>
    <property type="evidence" value="ECO:0007669"/>
    <property type="project" value="UniProtKB-UniRule"/>
</dbReference>
<dbReference type="GO" id="GO:0003899">
    <property type="term" value="F:DNA-directed RNA polymerase activity"/>
    <property type="evidence" value="ECO:0007669"/>
    <property type="project" value="UniProtKB-UniRule"/>
</dbReference>
<dbReference type="GO" id="GO:0000287">
    <property type="term" value="F:magnesium ion binding"/>
    <property type="evidence" value="ECO:0007669"/>
    <property type="project" value="UniProtKB-UniRule"/>
</dbReference>
<dbReference type="GO" id="GO:0008270">
    <property type="term" value="F:zinc ion binding"/>
    <property type="evidence" value="ECO:0007669"/>
    <property type="project" value="UniProtKB-UniRule"/>
</dbReference>
<dbReference type="GO" id="GO:0006351">
    <property type="term" value="P:DNA-templated transcription"/>
    <property type="evidence" value="ECO:0007669"/>
    <property type="project" value="UniProtKB-UniRule"/>
</dbReference>
<dbReference type="FunFam" id="4.10.860.120:FF:000007">
    <property type="entry name" value="DNA-directed RNA polymerase subunit gamma"/>
    <property type="match status" value="1"/>
</dbReference>
<dbReference type="Gene3D" id="1.10.40.90">
    <property type="match status" value="1"/>
</dbReference>
<dbReference type="Gene3D" id="2.40.40.20">
    <property type="match status" value="1"/>
</dbReference>
<dbReference type="Gene3D" id="4.10.860.120">
    <property type="entry name" value="RNA polymerase II, clamp domain"/>
    <property type="match status" value="1"/>
</dbReference>
<dbReference type="Gene3D" id="1.10.274.100">
    <property type="entry name" value="RNA polymerase Rpb1, domain 3"/>
    <property type="match status" value="1"/>
</dbReference>
<dbReference type="HAMAP" id="MF_01323">
    <property type="entry name" value="RNApol_bact_RpoC1"/>
    <property type="match status" value="1"/>
</dbReference>
<dbReference type="InterPro" id="IPR045867">
    <property type="entry name" value="DNA-dir_RpoC_beta_prime"/>
</dbReference>
<dbReference type="InterPro" id="IPR000722">
    <property type="entry name" value="RNA_pol_asu"/>
</dbReference>
<dbReference type="InterPro" id="IPR006592">
    <property type="entry name" value="RNA_pol_N"/>
</dbReference>
<dbReference type="InterPro" id="IPR007080">
    <property type="entry name" value="RNA_pol_Rpb1_1"/>
</dbReference>
<dbReference type="InterPro" id="IPR042102">
    <property type="entry name" value="RNA_pol_Rpb1_3_sf"/>
</dbReference>
<dbReference type="InterPro" id="IPR044893">
    <property type="entry name" value="RNA_pol_Rpb1_clamp_domain"/>
</dbReference>
<dbReference type="InterPro" id="IPR034678">
    <property type="entry name" value="RNApol_RpoC1"/>
</dbReference>
<dbReference type="PANTHER" id="PTHR19376">
    <property type="entry name" value="DNA-DIRECTED RNA POLYMERASE"/>
    <property type="match status" value="1"/>
</dbReference>
<dbReference type="PANTHER" id="PTHR19376:SF54">
    <property type="entry name" value="DNA-DIRECTED RNA POLYMERASE SUBUNIT BETA"/>
    <property type="match status" value="1"/>
</dbReference>
<dbReference type="Pfam" id="PF04997">
    <property type="entry name" value="RNA_pol_Rpb1_1"/>
    <property type="match status" value="1"/>
</dbReference>
<dbReference type="Pfam" id="PF00623">
    <property type="entry name" value="RNA_pol_Rpb1_2"/>
    <property type="match status" value="2"/>
</dbReference>
<dbReference type="SMART" id="SM00663">
    <property type="entry name" value="RPOLA_N"/>
    <property type="match status" value="1"/>
</dbReference>
<dbReference type="SUPFAM" id="SSF64484">
    <property type="entry name" value="beta and beta-prime subunits of DNA dependent RNA-polymerase"/>
    <property type="match status" value="1"/>
</dbReference>
<protein>
    <recommendedName>
        <fullName evidence="1">DNA-directed RNA polymerase subunit beta'</fullName>
        <ecNumber evidence="1">2.7.7.6</ecNumber>
    </recommendedName>
    <alternativeName>
        <fullName evidence="1">PEP</fullName>
    </alternativeName>
    <alternativeName>
        <fullName evidence="1">Plastid-encoded RNA polymerase subunit beta'</fullName>
        <shortName evidence="1">RNA polymerase subunit beta'</shortName>
    </alternativeName>
</protein>
<feature type="chain" id="PRO_0000353499" description="DNA-directed RNA polymerase subunit beta'">
    <location>
        <begin position="1"/>
        <end position="680"/>
    </location>
</feature>
<feature type="binding site" evidence="1">
    <location>
        <position position="69"/>
    </location>
    <ligand>
        <name>Zn(2+)</name>
        <dbReference type="ChEBI" id="CHEBI:29105"/>
    </ligand>
</feature>
<feature type="binding site" evidence="1">
    <location>
        <position position="71"/>
    </location>
    <ligand>
        <name>Zn(2+)</name>
        <dbReference type="ChEBI" id="CHEBI:29105"/>
    </ligand>
</feature>
<feature type="binding site" evidence="1">
    <location>
        <position position="87"/>
    </location>
    <ligand>
        <name>Zn(2+)</name>
        <dbReference type="ChEBI" id="CHEBI:29105"/>
    </ligand>
</feature>
<feature type="binding site" evidence="1">
    <location>
        <position position="90"/>
    </location>
    <ligand>
        <name>Zn(2+)</name>
        <dbReference type="ChEBI" id="CHEBI:29105"/>
    </ligand>
</feature>
<feature type="binding site" evidence="1">
    <location>
        <position position="489"/>
    </location>
    <ligand>
        <name>Mg(2+)</name>
        <dbReference type="ChEBI" id="CHEBI:18420"/>
    </ligand>
</feature>
<feature type="binding site" evidence="1">
    <location>
        <position position="491"/>
    </location>
    <ligand>
        <name>Mg(2+)</name>
        <dbReference type="ChEBI" id="CHEBI:18420"/>
    </ligand>
</feature>
<feature type="binding site" evidence="1">
    <location>
        <position position="493"/>
    </location>
    <ligand>
        <name>Mg(2+)</name>
        <dbReference type="ChEBI" id="CHEBI:18420"/>
    </ligand>
</feature>
<geneLocation type="chloroplast"/>